<accession>P65242</accession>
<accession>Q97QV3</accession>
<sequence length="319" mass="35125">MSDRKNMKLFALNSNQEIAQKIAQAVGVPLGKLSSRQFSDGEIQVNIEESVRGYDVYIIQSTSFPVNNHLMELLIMVDACVRASAHSINVVLPYFGYARQDRIACPREPLTAKLVANMLVKAGVDRILTLDLHAVQVQGFFDIPVDNLFTVPLFAKHYCDKGLLGSDVVVVSPKNSGVKRARSLAEYLDAPIAIIDYPQDDATRNEGYIIGDVEGKKAILIDDILNTGRTFSEASKIVEREGATEIYAVSSHGLFVEGAAELLDNTNIKEILVTDSVATKEKTPKNVCYITASELIGDAIVRIHERKPVSPLFAYNKKK</sequence>
<organism>
    <name type="scientific">Streptococcus pneumoniae (strain ATCC BAA-255 / R6)</name>
    <dbReference type="NCBI Taxonomy" id="171101"/>
    <lineage>
        <taxon>Bacteria</taxon>
        <taxon>Bacillati</taxon>
        <taxon>Bacillota</taxon>
        <taxon>Bacilli</taxon>
        <taxon>Lactobacillales</taxon>
        <taxon>Streptococcaceae</taxon>
        <taxon>Streptococcus</taxon>
    </lineage>
</organism>
<proteinExistence type="inferred from homology"/>
<comment type="function">
    <text evidence="1">Involved in the biosynthesis of the central metabolite phospho-alpha-D-ribosyl-1-pyrophosphate (PRPP) via the transfer of pyrophosphoryl group from ATP to 1-hydroxyl of ribose-5-phosphate (Rib-5-P).</text>
</comment>
<comment type="catalytic activity">
    <reaction evidence="1">
        <text>D-ribose 5-phosphate + ATP = 5-phospho-alpha-D-ribose 1-diphosphate + AMP + H(+)</text>
        <dbReference type="Rhea" id="RHEA:15609"/>
        <dbReference type="ChEBI" id="CHEBI:15378"/>
        <dbReference type="ChEBI" id="CHEBI:30616"/>
        <dbReference type="ChEBI" id="CHEBI:58017"/>
        <dbReference type="ChEBI" id="CHEBI:78346"/>
        <dbReference type="ChEBI" id="CHEBI:456215"/>
        <dbReference type="EC" id="2.7.6.1"/>
    </reaction>
</comment>
<comment type="cofactor">
    <cofactor evidence="1">
        <name>Mg(2+)</name>
        <dbReference type="ChEBI" id="CHEBI:18420"/>
    </cofactor>
    <text evidence="1">Binds 1 Mg(2+) ion per subunit.</text>
</comment>
<comment type="pathway">
    <text evidence="1">Metabolic intermediate biosynthesis; 5-phospho-alpha-D-ribose 1-diphosphate biosynthesis; 5-phospho-alpha-D-ribose 1-diphosphate from D-ribose 5-phosphate (route I): step 1/1.</text>
</comment>
<comment type="subunit">
    <text evidence="1">Homohexamer.</text>
</comment>
<comment type="subcellular location">
    <subcellularLocation>
        <location evidence="1">Cytoplasm</location>
    </subcellularLocation>
</comment>
<comment type="similarity">
    <text evidence="1">Belongs to the ribose-phosphate pyrophosphokinase family. Class I subfamily.</text>
</comment>
<comment type="caution">
    <text evidence="1">Part of a set of proteins in which some residues (ACT_SITE, NP_BIND, REGION and BINDING) are not conserved.</text>
</comment>
<evidence type="ECO:0000255" key="1">
    <source>
        <dbReference type="HAMAP-Rule" id="MF_00583"/>
    </source>
</evidence>
<protein>
    <recommendedName>
        <fullName evidence="1">Putative ribose-phosphate pyrophosphokinase 2</fullName>
        <shortName evidence="1">RPPK 2</shortName>
        <ecNumber evidence="1">2.7.6.1</ecNumber>
    </recommendedName>
    <alternativeName>
        <fullName evidence="1">5-phospho-D-ribosyl alpha-1-diphosphate synthase 2</fullName>
    </alternativeName>
    <alternativeName>
        <fullName evidence="1">Phosphoribosyl diphosphate synthase 2</fullName>
    </alternativeName>
    <alternativeName>
        <fullName evidence="1">Phosphoribosyl pyrophosphate synthase 2</fullName>
        <shortName evidence="1">P-Rib-PP synthase 2</shortName>
        <shortName evidence="1">PRPP synthase 2</shortName>
        <shortName evidence="1">PRPPase 2</shortName>
    </alternativeName>
</protein>
<keyword id="KW-0067">ATP-binding</keyword>
<keyword id="KW-0963">Cytoplasm</keyword>
<keyword id="KW-0418">Kinase</keyword>
<keyword id="KW-0460">Magnesium</keyword>
<keyword id="KW-0479">Metal-binding</keyword>
<keyword id="KW-0545">Nucleotide biosynthesis</keyword>
<keyword id="KW-0547">Nucleotide-binding</keyword>
<keyword id="KW-1185">Reference proteome</keyword>
<keyword id="KW-0808">Transferase</keyword>
<dbReference type="EC" id="2.7.6.1" evidence="1"/>
<dbReference type="EMBL" id="AE007317">
    <property type="protein sequence ID" value="AAK99806.1"/>
    <property type="molecule type" value="Genomic_DNA"/>
</dbReference>
<dbReference type="PIR" id="B97997">
    <property type="entry name" value="B97997"/>
</dbReference>
<dbReference type="RefSeq" id="NP_358596.1">
    <property type="nucleotide sequence ID" value="NC_003098.1"/>
</dbReference>
<dbReference type="RefSeq" id="WP_001283813.1">
    <property type="nucleotide sequence ID" value="NC_003098.1"/>
</dbReference>
<dbReference type="SMR" id="P65242"/>
<dbReference type="STRING" id="171101.spr1002"/>
<dbReference type="KEGG" id="spr:spr1002"/>
<dbReference type="PATRIC" id="fig|171101.6.peg.1090"/>
<dbReference type="eggNOG" id="COG0462">
    <property type="taxonomic scope" value="Bacteria"/>
</dbReference>
<dbReference type="HOGENOM" id="CLU_033546_1_0_9"/>
<dbReference type="UniPathway" id="UPA00087">
    <property type="reaction ID" value="UER00172"/>
</dbReference>
<dbReference type="Proteomes" id="UP000000586">
    <property type="component" value="Chromosome"/>
</dbReference>
<dbReference type="GO" id="GO:0005737">
    <property type="term" value="C:cytoplasm"/>
    <property type="evidence" value="ECO:0000318"/>
    <property type="project" value="GO_Central"/>
</dbReference>
<dbReference type="GO" id="GO:0002189">
    <property type="term" value="C:ribose phosphate diphosphokinase complex"/>
    <property type="evidence" value="ECO:0000318"/>
    <property type="project" value="GO_Central"/>
</dbReference>
<dbReference type="GO" id="GO:0005524">
    <property type="term" value="F:ATP binding"/>
    <property type="evidence" value="ECO:0007669"/>
    <property type="project" value="UniProtKB-KW"/>
</dbReference>
<dbReference type="GO" id="GO:0016301">
    <property type="term" value="F:kinase activity"/>
    <property type="evidence" value="ECO:0007669"/>
    <property type="project" value="UniProtKB-KW"/>
</dbReference>
<dbReference type="GO" id="GO:0000287">
    <property type="term" value="F:magnesium ion binding"/>
    <property type="evidence" value="ECO:0007669"/>
    <property type="project" value="UniProtKB-UniRule"/>
</dbReference>
<dbReference type="GO" id="GO:0004749">
    <property type="term" value="F:ribose phosphate diphosphokinase activity"/>
    <property type="evidence" value="ECO:0000318"/>
    <property type="project" value="GO_Central"/>
</dbReference>
<dbReference type="GO" id="GO:0006015">
    <property type="term" value="P:5-phosphoribose 1-diphosphate biosynthetic process"/>
    <property type="evidence" value="ECO:0000318"/>
    <property type="project" value="GO_Central"/>
</dbReference>
<dbReference type="GO" id="GO:0006164">
    <property type="term" value="P:purine nucleotide biosynthetic process"/>
    <property type="evidence" value="ECO:0000318"/>
    <property type="project" value="GO_Central"/>
</dbReference>
<dbReference type="GO" id="GO:0009156">
    <property type="term" value="P:ribonucleoside monophosphate biosynthetic process"/>
    <property type="evidence" value="ECO:0007669"/>
    <property type="project" value="InterPro"/>
</dbReference>
<dbReference type="CDD" id="cd06223">
    <property type="entry name" value="PRTases_typeI"/>
    <property type="match status" value="1"/>
</dbReference>
<dbReference type="FunFam" id="3.40.50.2020:FF:000042">
    <property type="entry name" value="Putative ribose-phosphate pyrophosphokinase"/>
    <property type="match status" value="1"/>
</dbReference>
<dbReference type="FunFam" id="3.40.50.2020:FF:000001">
    <property type="entry name" value="Ribose-phosphate pyrophosphokinase"/>
    <property type="match status" value="1"/>
</dbReference>
<dbReference type="Gene3D" id="3.40.50.2020">
    <property type="match status" value="2"/>
</dbReference>
<dbReference type="HAMAP" id="MF_00583_B">
    <property type="entry name" value="RibP_PPkinase_B"/>
    <property type="match status" value="1"/>
</dbReference>
<dbReference type="InterPro" id="IPR000842">
    <property type="entry name" value="PRib_PP_synth_CS"/>
</dbReference>
<dbReference type="InterPro" id="IPR029099">
    <property type="entry name" value="Pribosyltran_N"/>
</dbReference>
<dbReference type="InterPro" id="IPR000836">
    <property type="entry name" value="PRibTrfase_dom"/>
</dbReference>
<dbReference type="InterPro" id="IPR029057">
    <property type="entry name" value="PRTase-like"/>
</dbReference>
<dbReference type="InterPro" id="IPR005946">
    <property type="entry name" value="Rib-P_diPkinase"/>
</dbReference>
<dbReference type="InterPro" id="IPR037515">
    <property type="entry name" value="Rib-P_diPkinase_bac"/>
</dbReference>
<dbReference type="NCBIfam" id="NF002320">
    <property type="entry name" value="PRK01259.1"/>
    <property type="match status" value="1"/>
</dbReference>
<dbReference type="NCBIfam" id="NF002686">
    <property type="entry name" value="PRK02458.1"/>
    <property type="match status" value="1"/>
</dbReference>
<dbReference type="NCBIfam" id="TIGR01251">
    <property type="entry name" value="ribP_PPkin"/>
    <property type="match status" value="1"/>
</dbReference>
<dbReference type="PANTHER" id="PTHR10210">
    <property type="entry name" value="RIBOSE-PHOSPHATE DIPHOSPHOKINASE FAMILY MEMBER"/>
    <property type="match status" value="1"/>
</dbReference>
<dbReference type="PANTHER" id="PTHR10210:SF41">
    <property type="entry name" value="RIBOSE-PHOSPHATE PYROPHOSPHOKINASE 1, CHLOROPLASTIC"/>
    <property type="match status" value="1"/>
</dbReference>
<dbReference type="Pfam" id="PF14572">
    <property type="entry name" value="Pribosyl_synth"/>
    <property type="match status" value="1"/>
</dbReference>
<dbReference type="Pfam" id="PF13793">
    <property type="entry name" value="Pribosyltran_N"/>
    <property type="match status" value="1"/>
</dbReference>
<dbReference type="SMART" id="SM01400">
    <property type="entry name" value="Pribosyltran_N"/>
    <property type="match status" value="1"/>
</dbReference>
<dbReference type="SUPFAM" id="SSF53271">
    <property type="entry name" value="PRTase-like"/>
    <property type="match status" value="2"/>
</dbReference>
<dbReference type="PROSITE" id="PS00114">
    <property type="entry name" value="PRPP_SYNTHASE"/>
    <property type="match status" value="1"/>
</dbReference>
<reference key="1">
    <citation type="journal article" date="2001" name="J. Bacteriol.">
        <title>Genome of the bacterium Streptococcus pneumoniae strain R6.</title>
        <authorList>
            <person name="Hoskins J."/>
            <person name="Alborn W.E. Jr."/>
            <person name="Arnold J."/>
            <person name="Blaszczak L.C."/>
            <person name="Burgett S."/>
            <person name="DeHoff B.S."/>
            <person name="Estrem S.T."/>
            <person name="Fritz L."/>
            <person name="Fu D.-J."/>
            <person name="Fuller W."/>
            <person name="Geringer C."/>
            <person name="Gilmour R."/>
            <person name="Glass J.S."/>
            <person name="Khoja H."/>
            <person name="Kraft A.R."/>
            <person name="Lagace R.E."/>
            <person name="LeBlanc D.J."/>
            <person name="Lee L.N."/>
            <person name="Lefkowitz E.J."/>
            <person name="Lu J."/>
            <person name="Matsushima P."/>
            <person name="McAhren S.M."/>
            <person name="McHenney M."/>
            <person name="McLeaster K."/>
            <person name="Mundy C.W."/>
            <person name="Nicas T.I."/>
            <person name="Norris F.H."/>
            <person name="O'Gara M."/>
            <person name="Peery R.B."/>
            <person name="Robertson G.T."/>
            <person name="Rockey P."/>
            <person name="Sun P.-M."/>
            <person name="Winkler M.E."/>
            <person name="Yang Y."/>
            <person name="Young-Bellido M."/>
            <person name="Zhao G."/>
            <person name="Zook C.A."/>
            <person name="Baltz R.H."/>
            <person name="Jaskunas S.R."/>
            <person name="Rosteck P.R. Jr."/>
            <person name="Skatrud P.L."/>
            <person name="Glass J.I."/>
        </authorList>
    </citation>
    <scope>NUCLEOTIDE SEQUENCE [LARGE SCALE GENOMIC DNA]</scope>
    <source>
        <strain>ATCC BAA-255 / R6</strain>
    </source>
</reference>
<gene>
    <name evidence="1" type="primary">prs2</name>
    <name type="synonym">prs</name>
    <name type="ordered locus">spr1002</name>
</gene>
<name>KPRS2_STRR6</name>
<feature type="chain" id="PRO_0000141207" description="Putative ribose-phosphate pyrophosphokinase 2">
    <location>
        <begin position="1"/>
        <end position="319"/>
    </location>
</feature>
<feature type="binding site" evidence="1">
    <location>
        <begin position="40"/>
        <end position="42"/>
    </location>
    <ligand>
        <name>ATP</name>
        <dbReference type="ChEBI" id="CHEBI:30616"/>
    </ligand>
</feature>
<feature type="binding site" evidence="1">
    <location>
        <begin position="99"/>
        <end position="100"/>
    </location>
    <ligand>
        <name>ATP</name>
        <dbReference type="ChEBI" id="CHEBI:30616"/>
    </ligand>
</feature>
<feature type="binding site" evidence="1">
    <location>
        <position position="133"/>
    </location>
    <ligand>
        <name>Mg(2+)</name>
        <dbReference type="ChEBI" id="CHEBI:18420"/>
    </ligand>
</feature>
<feature type="binding site" evidence="1">
    <location>
        <position position="222"/>
    </location>
    <ligand>
        <name>D-ribose 5-phosphate</name>
        <dbReference type="ChEBI" id="CHEBI:78346"/>
    </ligand>
</feature>
<feature type="binding site" evidence="1">
    <location>
        <begin position="226"/>
        <end position="230"/>
    </location>
    <ligand>
        <name>D-ribose 5-phosphate</name>
        <dbReference type="ChEBI" id="CHEBI:78346"/>
    </ligand>
</feature>